<dbReference type="EMBL" id="AP001918">
    <property type="protein sequence ID" value="BAA97937.1"/>
    <property type="molecule type" value="Genomic_DNA"/>
</dbReference>
<dbReference type="RefSeq" id="NP_061446.1">
    <property type="nucleotide sequence ID" value="NC_002483.1"/>
</dbReference>
<geneLocation type="plasmid">
    <name>F</name>
</geneLocation>
<protein>
    <recommendedName>
        <fullName>Uncharacterized protein YubN</fullName>
    </recommendedName>
</protein>
<organism>
    <name type="scientific">Escherichia coli (strain K12)</name>
    <dbReference type="NCBI Taxonomy" id="83333"/>
    <lineage>
        <taxon>Bacteria</taxon>
        <taxon>Pseudomonadati</taxon>
        <taxon>Pseudomonadota</taxon>
        <taxon>Gammaproteobacteria</taxon>
        <taxon>Enterobacterales</taxon>
        <taxon>Enterobacteriaceae</taxon>
        <taxon>Escherichia</taxon>
    </lineage>
</organism>
<proteinExistence type="predicted"/>
<feature type="chain" id="PRO_0000262598" description="Uncharacterized protein YubN">
    <location>
        <begin position="1"/>
        <end position="105"/>
    </location>
</feature>
<feature type="region of interest" description="Disordered" evidence="1">
    <location>
        <begin position="22"/>
        <end position="105"/>
    </location>
</feature>
<feature type="compositionally biased region" description="Basic and acidic residues" evidence="1">
    <location>
        <begin position="61"/>
        <end position="83"/>
    </location>
</feature>
<feature type="compositionally biased region" description="Basic residues" evidence="1">
    <location>
        <begin position="93"/>
        <end position="105"/>
    </location>
</feature>
<evidence type="ECO:0000256" key="1">
    <source>
        <dbReference type="SAM" id="MobiDB-lite"/>
    </source>
</evidence>
<reference key="1">
    <citation type="submission" date="2000-04" db="EMBL/GenBank/DDBJ databases">
        <title>Complete nucleotide sequence of the F plasmid: its implications for organization and diversification of plasmid genomes.</title>
        <authorList>
            <person name="Shimizu H."/>
            <person name="Saitoh Y."/>
            <person name="Suda Y."/>
            <person name="Uehara K."/>
            <person name="Sampei G."/>
            <person name="Mizobuchi K."/>
        </authorList>
    </citation>
    <scope>NUCLEOTIDE SEQUENCE [LARGE SCALE GENOMIC DNA]</scope>
    <source>
        <strain>K12 / CR63</strain>
    </source>
</reference>
<gene>
    <name type="primary">yubN</name>
    <name type="synonym">ygdA</name>
    <name type="ordered locus">ECOK12F067</name>
</gene>
<name>YUBN_ECOLI</name>
<keyword id="KW-0614">Plasmid</keyword>
<accession>Q9JMR2</accession>
<sequence length="105" mass="11389">MKRGLRNGVAPCIPVAFCRDAGSAGHGATEAARPERSLQARGFASGMEARQGGDNFAGSVHDSRPARGDARKRHCQENNKTDRNQGSSNQSQNRRKKRIIKGKVM</sequence>